<sequence>MTEHVQPANPSDATPQHRYTAELAGQIEQRWQDRWSEEGTFNAPNPVGPLAGDVPADKLFVQDMFPYPSGTGLHVGHPLGYIATDVFARYHRMQGHNVLHTLGYDAFGLPAEQYAVQTGTHPRTTTEANIVNMKRQLRRLGLGHDERRTFATTDTDFYHWTQWIFLQIHDAWFDKEAGKARRISELEAEFVSGARSLEDGREWASLSVSEKEAVLDSYRLVYHSDSMVNWCPGLGTVLANEEVTADGRSDRGNFPVFRKHLQQWMMRITAYSDRLVDDLEYLDWPEKVKTMQRNWIGRSHGAQVKFQADGHEIEVFTTRPDTLFGATYVTLAPEHELVDDIVAAEWPRGVDSRWTGGAATPAEAVAAYRKSIAAKSDLERQEYKEKTGVFLGTYAVNPVNGHKLPVFIADYVLTGYGTGAIMAVPGHDHRDYEFATEFGLDIVEVISGGDLTKDAYTGDGTIVNSDFLNGMSVADAKKAITERLEADGTGKGTIQYKLRDWLFARQRYWGEPFPIVYDAEGNAHALPESSLPVELPEVEDYAPVSFDPDDASSEPSPPLAKAVDWVNVELDLGDGLQTYRRDTNVMPQWAGSSWYQLRYIDPTNPDVFCDKENERYWTGPRPEIHGPNDPGGVDLYVGGVEHAVLHLLYSRFWHKVLFDLGYVSSSEPYRRLYNQGYIQAYAYTDARGVYVPADEVEEKDGKFFHQGVEVNREYGKMGKSLKNSVSPDEICEEYGADTLRVYEMSMGPLDTSRPWATKDVVGAQRFLQRAWRVVVDEESGALRVTDDAPAEDTLRALNKAIAGVSEDYTALRDNTAAAKLIEYTNHLTKAYPGGAPRSVVEPLVLMLAPLAPHLAEELWSRLGHEKSLAHGPFPVAEEKWLVEDTVEYPIQVNGKVRSRVTVAADAPREEIEKIALADDKIVALLDGQDPRKVIVVPGKMVNIVR</sequence>
<dbReference type="EC" id="6.1.1.4" evidence="1"/>
<dbReference type="EMBL" id="CP000431">
    <property type="protein sequence ID" value="ABG95425.1"/>
    <property type="molecule type" value="Genomic_DNA"/>
</dbReference>
<dbReference type="RefSeq" id="WP_011596228.1">
    <property type="nucleotide sequence ID" value="NC_008268.1"/>
</dbReference>
<dbReference type="SMR" id="Q0SAL1"/>
<dbReference type="KEGG" id="rha:RHA1_ro03622"/>
<dbReference type="PATRIC" id="fig|101510.16.peg.3650"/>
<dbReference type="eggNOG" id="COG0495">
    <property type="taxonomic scope" value="Bacteria"/>
</dbReference>
<dbReference type="HOGENOM" id="CLU_004427_0_0_11"/>
<dbReference type="OrthoDB" id="9810365at2"/>
<dbReference type="Proteomes" id="UP000008710">
    <property type="component" value="Chromosome"/>
</dbReference>
<dbReference type="GO" id="GO:0005829">
    <property type="term" value="C:cytosol"/>
    <property type="evidence" value="ECO:0007669"/>
    <property type="project" value="TreeGrafter"/>
</dbReference>
<dbReference type="GO" id="GO:0002161">
    <property type="term" value="F:aminoacyl-tRNA deacylase activity"/>
    <property type="evidence" value="ECO:0007669"/>
    <property type="project" value="InterPro"/>
</dbReference>
<dbReference type="GO" id="GO:0005524">
    <property type="term" value="F:ATP binding"/>
    <property type="evidence" value="ECO:0007669"/>
    <property type="project" value="UniProtKB-UniRule"/>
</dbReference>
<dbReference type="GO" id="GO:0004823">
    <property type="term" value="F:leucine-tRNA ligase activity"/>
    <property type="evidence" value="ECO:0007669"/>
    <property type="project" value="UniProtKB-UniRule"/>
</dbReference>
<dbReference type="GO" id="GO:0006429">
    <property type="term" value="P:leucyl-tRNA aminoacylation"/>
    <property type="evidence" value="ECO:0007669"/>
    <property type="project" value="UniProtKB-UniRule"/>
</dbReference>
<dbReference type="CDD" id="cd07958">
    <property type="entry name" value="Anticodon_Ia_Leu_BEm"/>
    <property type="match status" value="1"/>
</dbReference>
<dbReference type="FunFam" id="3.10.20.590:FF:000001">
    <property type="entry name" value="Leucine--tRNA ligase"/>
    <property type="match status" value="1"/>
</dbReference>
<dbReference type="FunFam" id="3.40.50.620:FF:000056">
    <property type="entry name" value="Leucine--tRNA ligase"/>
    <property type="match status" value="1"/>
</dbReference>
<dbReference type="FunFam" id="3.40.50.620:FF:000060">
    <property type="entry name" value="Leucine--tRNA ligase"/>
    <property type="match status" value="1"/>
</dbReference>
<dbReference type="FunFam" id="3.40.50.620:FF:000087">
    <property type="entry name" value="Leucine--tRNA ligase"/>
    <property type="match status" value="1"/>
</dbReference>
<dbReference type="FunFam" id="3.90.740.10:FF:000017">
    <property type="entry name" value="Leucine--tRNA ligase"/>
    <property type="match status" value="1"/>
</dbReference>
<dbReference type="FunFam" id="1.10.730.10:FF:000011">
    <property type="entry name" value="Leucine--tRNA ligase chloroplastic/mitochondrial"/>
    <property type="match status" value="1"/>
</dbReference>
<dbReference type="Gene3D" id="3.40.50.620">
    <property type="entry name" value="HUPs"/>
    <property type="match status" value="3"/>
</dbReference>
<dbReference type="Gene3D" id="1.10.730.10">
    <property type="entry name" value="Isoleucyl-tRNA Synthetase, Domain 1"/>
    <property type="match status" value="1"/>
</dbReference>
<dbReference type="HAMAP" id="MF_00049_B">
    <property type="entry name" value="Leu_tRNA_synth_B"/>
    <property type="match status" value="1"/>
</dbReference>
<dbReference type="InterPro" id="IPR002302">
    <property type="entry name" value="Leu-tRNA-ligase"/>
</dbReference>
<dbReference type="InterPro" id="IPR025709">
    <property type="entry name" value="Leu_tRNA-synth_edit"/>
</dbReference>
<dbReference type="InterPro" id="IPR013155">
    <property type="entry name" value="M/V/L/I-tRNA-synth_anticd-bd"/>
</dbReference>
<dbReference type="InterPro" id="IPR015413">
    <property type="entry name" value="Methionyl/Leucyl_tRNA_Synth"/>
</dbReference>
<dbReference type="InterPro" id="IPR014729">
    <property type="entry name" value="Rossmann-like_a/b/a_fold"/>
</dbReference>
<dbReference type="InterPro" id="IPR009080">
    <property type="entry name" value="tRNAsynth_Ia_anticodon-bd"/>
</dbReference>
<dbReference type="InterPro" id="IPR009008">
    <property type="entry name" value="Val/Leu/Ile-tRNA-synth_edit"/>
</dbReference>
<dbReference type="NCBIfam" id="TIGR00396">
    <property type="entry name" value="leuS_bact"/>
    <property type="match status" value="1"/>
</dbReference>
<dbReference type="PANTHER" id="PTHR43740:SF2">
    <property type="entry name" value="LEUCINE--TRNA LIGASE, MITOCHONDRIAL"/>
    <property type="match status" value="1"/>
</dbReference>
<dbReference type="PANTHER" id="PTHR43740">
    <property type="entry name" value="LEUCYL-TRNA SYNTHETASE"/>
    <property type="match status" value="1"/>
</dbReference>
<dbReference type="Pfam" id="PF08264">
    <property type="entry name" value="Anticodon_1"/>
    <property type="match status" value="1"/>
</dbReference>
<dbReference type="Pfam" id="PF13603">
    <property type="entry name" value="tRNA-synt_1_2"/>
    <property type="match status" value="1"/>
</dbReference>
<dbReference type="Pfam" id="PF09334">
    <property type="entry name" value="tRNA-synt_1g"/>
    <property type="match status" value="1"/>
</dbReference>
<dbReference type="PRINTS" id="PR00985">
    <property type="entry name" value="TRNASYNTHLEU"/>
</dbReference>
<dbReference type="SUPFAM" id="SSF47323">
    <property type="entry name" value="Anticodon-binding domain of a subclass of class I aminoacyl-tRNA synthetases"/>
    <property type="match status" value="1"/>
</dbReference>
<dbReference type="SUPFAM" id="SSF52374">
    <property type="entry name" value="Nucleotidylyl transferase"/>
    <property type="match status" value="1"/>
</dbReference>
<dbReference type="SUPFAM" id="SSF50677">
    <property type="entry name" value="ValRS/IleRS/LeuRS editing domain"/>
    <property type="match status" value="1"/>
</dbReference>
<feature type="chain" id="PRO_0000334804" description="Leucine--tRNA ligase">
    <location>
        <begin position="1"/>
        <end position="945"/>
    </location>
</feature>
<feature type="short sequence motif" description="'HIGH' region">
    <location>
        <begin position="66"/>
        <end position="77"/>
    </location>
</feature>
<feature type="short sequence motif" description="'KMSKS' region">
    <location>
        <begin position="716"/>
        <end position="720"/>
    </location>
</feature>
<feature type="binding site" evidence="1">
    <location>
        <position position="719"/>
    </location>
    <ligand>
        <name>ATP</name>
        <dbReference type="ChEBI" id="CHEBI:30616"/>
    </ligand>
</feature>
<keyword id="KW-0030">Aminoacyl-tRNA synthetase</keyword>
<keyword id="KW-0067">ATP-binding</keyword>
<keyword id="KW-0963">Cytoplasm</keyword>
<keyword id="KW-0436">Ligase</keyword>
<keyword id="KW-0547">Nucleotide-binding</keyword>
<keyword id="KW-0648">Protein biosynthesis</keyword>
<name>SYL_RHOJR</name>
<gene>
    <name evidence="1" type="primary">leuS</name>
    <name type="ordered locus">RHA1_ro03622</name>
</gene>
<proteinExistence type="inferred from homology"/>
<evidence type="ECO:0000255" key="1">
    <source>
        <dbReference type="HAMAP-Rule" id="MF_00049"/>
    </source>
</evidence>
<accession>Q0SAL1</accession>
<reference key="1">
    <citation type="journal article" date="2006" name="Proc. Natl. Acad. Sci. U.S.A.">
        <title>The complete genome of Rhodococcus sp. RHA1 provides insights into a catabolic powerhouse.</title>
        <authorList>
            <person name="McLeod M.P."/>
            <person name="Warren R.L."/>
            <person name="Hsiao W.W.L."/>
            <person name="Araki N."/>
            <person name="Myhre M."/>
            <person name="Fernandes C."/>
            <person name="Miyazawa D."/>
            <person name="Wong W."/>
            <person name="Lillquist A.L."/>
            <person name="Wang D."/>
            <person name="Dosanjh M."/>
            <person name="Hara H."/>
            <person name="Petrescu A."/>
            <person name="Morin R.D."/>
            <person name="Yang G."/>
            <person name="Stott J.M."/>
            <person name="Schein J.E."/>
            <person name="Shin H."/>
            <person name="Smailus D."/>
            <person name="Siddiqui A.S."/>
            <person name="Marra M.A."/>
            <person name="Jones S.J.M."/>
            <person name="Holt R."/>
            <person name="Brinkman F.S.L."/>
            <person name="Miyauchi K."/>
            <person name="Fukuda M."/>
            <person name="Davies J.E."/>
            <person name="Mohn W.W."/>
            <person name="Eltis L.D."/>
        </authorList>
    </citation>
    <scope>NUCLEOTIDE SEQUENCE [LARGE SCALE GENOMIC DNA]</scope>
    <source>
        <strain>RHA1</strain>
    </source>
</reference>
<organism>
    <name type="scientific">Rhodococcus jostii (strain RHA1)</name>
    <dbReference type="NCBI Taxonomy" id="101510"/>
    <lineage>
        <taxon>Bacteria</taxon>
        <taxon>Bacillati</taxon>
        <taxon>Actinomycetota</taxon>
        <taxon>Actinomycetes</taxon>
        <taxon>Mycobacteriales</taxon>
        <taxon>Nocardiaceae</taxon>
        <taxon>Rhodococcus</taxon>
    </lineage>
</organism>
<comment type="catalytic activity">
    <reaction evidence="1">
        <text>tRNA(Leu) + L-leucine + ATP = L-leucyl-tRNA(Leu) + AMP + diphosphate</text>
        <dbReference type="Rhea" id="RHEA:11688"/>
        <dbReference type="Rhea" id="RHEA-COMP:9613"/>
        <dbReference type="Rhea" id="RHEA-COMP:9622"/>
        <dbReference type="ChEBI" id="CHEBI:30616"/>
        <dbReference type="ChEBI" id="CHEBI:33019"/>
        <dbReference type="ChEBI" id="CHEBI:57427"/>
        <dbReference type="ChEBI" id="CHEBI:78442"/>
        <dbReference type="ChEBI" id="CHEBI:78494"/>
        <dbReference type="ChEBI" id="CHEBI:456215"/>
        <dbReference type="EC" id="6.1.1.4"/>
    </reaction>
</comment>
<comment type="subcellular location">
    <subcellularLocation>
        <location evidence="1">Cytoplasm</location>
    </subcellularLocation>
</comment>
<comment type="similarity">
    <text evidence="1">Belongs to the class-I aminoacyl-tRNA synthetase family.</text>
</comment>
<protein>
    <recommendedName>
        <fullName evidence="1">Leucine--tRNA ligase</fullName>
        <ecNumber evidence="1">6.1.1.4</ecNumber>
    </recommendedName>
    <alternativeName>
        <fullName evidence="1">Leucyl-tRNA synthetase</fullName>
        <shortName evidence="1">LeuRS</shortName>
    </alternativeName>
</protein>